<keyword id="KW-0067">ATP-binding</keyword>
<keyword id="KW-0133">Cell shape</keyword>
<keyword id="KW-0961">Cell wall biogenesis/degradation</keyword>
<keyword id="KW-0963">Cytoplasm</keyword>
<keyword id="KW-0436">Ligase</keyword>
<keyword id="KW-0460">Magnesium</keyword>
<keyword id="KW-0464">Manganese</keyword>
<keyword id="KW-0479">Metal-binding</keyword>
<keyword id="KW-0547">Nucleotide-binding</keyword>
<keyword id="KW-0573">Peptidoglycan synthesis</keyword>
<keyword id="KW-1185">Reference proteome</keyword>
<protein>
    <recommendedName>
        <fullName evidence="2">D-alanine--D-alanine ligase</fullName>
        <ecNumber evidence="2">6.3.2.4</ecNumber>
    </recommendedName>
    <alternativeName>
        <fullName evidence="2">D-Ala-D-Ala ligase</fullName>
    </alternativeName>
    <alternativeName>
        <fullName evidence="2">D-alanylalanine synthetase</fullName>
    </alternativeName>
</protein>
<organism>
    <name type="scientific">Lactiplantibacillus plantarum (strain ATCC BAA-793 / NCIMB 8826 / WCFS1)</name>
    <name type="common">Lactobacillus plantarum</name>
    <dbReference type="NCBI Taxonomy" id="220668"/>
    <lineage>
        <taxon>Bacteria</taxon>
        <taxon>Bacillati</taxon>
        <taxon>Bacillota</taxon>
        <taxon>Bacilli</taxon>
        <taxon>Lactobacillales</taxon>
        <taxon>Lactobacillaceae</taxon>
        <taxon>Lactiplantibacillus</taxon>
    </lineage>
</organism>
<comment type="function">
    <text evidence="2">Cell wall formation.</text>
</comment>
<comment type="catalytic activity">
    <reaction evidence="2">
        <text>2 D-alanine + ATP = D-alanyl-D-alanine + ADP + phosphate + H(+)</text>
        <dbReference type="Rhea" id="RHEA:11224"/>
        <dbReference type="ChEBI" id="CHEBI:15378"/>
        <dbReference type="ChEBI" id="CHEBI:30616"/>
        <dbReference type="ChEBI" id="CHEBI:43474"/>
        <dbReference type="ChEBI" id="CHEBI:57416"/>
        <dbReference type="ChEBI" id="CHEBI:57822"/>
        <dbReference type="ChEBI" id="CHEBI:456216"/>
        <dbReference type="EC" id="6.3.2.4"/>
    </reaction>
</comment>
<comment type="cofactor">
    <cofactor evidence="1">
        <name>Mg(2+)</name>
        <dbReference type="ChEBI" id="CHEBI:18420"/>
    </cofactor>
    <cofactor evidence="1">
        <name>Mn(2+)</name>
        <dbReference type="ChEBI" id="CHEBI:29035"/>
    </cofactor>
    <text evidence="1">Binds 2 magnesium or manganese ions per subunit.</text>
</comment>
<comment type="pathway">
    <text evidence="2">Cell wall biogenesis; peptidoglycan biosynthesis.</text>
</comment>
<comment type="subcellular location">
    <subcellularLocation>
        <location evidence="2">Cytoplasm</location>
    </subcellularLocation>
</comment>
<comment type="similarity">
    <text evidence="2">Belongs to the D-alanine--D-alanine ligase family.</text>
</comment>
<dbReference type="EC" id="6.3.2.4" evidence="2"/>
<dbReference type="EMBL" id="AL935263">
    <property type="protein sequence ID" value="CCC79537.1"/>
    <property type="molecule type" value="Genomic_DNA"/>
</dbReference>
<dbReference type="RefSeq" id="WP_003644652.1">
    <property type="nucleotide sequence ID" value="NC_004567.2"/>
</dbReference>
<dbReference type="RefSeq" id="YP_004890051.1">
    <property type="nucleotide sequence ID" value="NC_004567.2"/>
</dbReference>
<dbReference type="SMR" id="Q88UV8"/>
<dbReference type="STRING" id="220668.lp_2345"/>
<dbReference type="EnsemblBacteria" id="CCC79537">
    <property type="protein sequence ID" value="CCC79537"/>
    <property type="gene ID" value="lp_2345"/>
</dbReference>
<dbReference type="KEGG" id="lpl:lp_2345"/>
<dbReference type="PATRIC" id="fig|220668.9.peg.1982"/>
<dbReference type="eggNOG" id="COG1181">
    <property type="taxonomic scope" value="Bacteria"/>
</dbReference>
<dbReference type="HOGENOM" id="CLU_039268_0_1_9"/>
<dbReference type="OrthoDB" id="9813261at2"/>
<dbReference type="PhylomeDB" id="Q88UV8"/>
<dbReference type="UniPathway" id="UPA00219"/>
<dbReference type="Proteomes" id="UP000000432">
    <property type="component" value="Chromosome"/>
</dbReference>
<dbReference type="GO" id="GO:0005829">
    <property type="term" value="C:cytosol"/>
    <property type="evidence" value="ECO:0007669"/>
    <property type="project" value="TreeGrafter"/>
</dbReference>
<dbReference type="GO" id="GO:0005524">
    <property type="term" value="F:ATP binding"/>
    <property type="evidence" value="ECO:0007669"/>
    <property type="project" value="UniProtKB-KW"/>
</dbReference>
<dbReference type="GO" id="GO:0008716">
    <property type="term" value="F:D-alanine-D-alanine ligase activity"/>
    <property type="evidence" value="ECO:0007669"/>
    <property type="project" value="UniProtKB-UniRule"/>
</dbReference>
<dbReference type="GO" id="GO:0046872">
    <property type="term" value="F:metal ion binding"/>
    <property type="evidence" value="ECO:0007669"/>
    <property type="project" value="UniProtKB-KW"/>
</dbReference>
<dbReference type="GO" id="GO:0071555">
    <property type="term" value="P:cell wall organization"/>
    <property type="evidence" value="ECO:0007669"/>
    <property type="project" value="UniProtKB-KW"/>
</dbReference>
<dbReference type="GO" id="GO:0009252">
    <property type="term" value="P:peptidoglycan biosynthetic process"/>
    <property type="evidence" value="ECO:0007669"/>
    <property type="project" value="UniProtKB-UniRule"/>
</dbReference>
<dbReference type="GO" id="GO:0008360">
    <property type="term" value="P:regulation of cell shape"/>
    <property type="evidence" value="ECO:0007669"/>
    <property type="project" value="UniProtKB-KW"/>
</dbReference>
<dbReference type="FunFam" id="3.30.470.20:FF:000008">
    <property type="entry name" value="D-alanine--D-alanine ligase"/>
    <property type="match status" value="1"/>
</dbReference>
<dbReference type="Gene3D" id="3.40.50.20">
    <property type="match status" value="1"/>
</dbReference>
<dbReference type="Gene3D" id="3.30.1490.20">
    <property type="entry name" value="ATP-grasp fold, A domain"/>
    <property type="match status" value="1"/>
</dbReference>
<dbReference type="Gene3D" id="3.30.470.20">
    <property type="entry name" value="ATP-grasp fold, B domain"/>
    <property type="match status" value="1"/>
</dbReference>
<dbReference type="HAMAP" id="MF_00047">
    <property type="entry name" value="Dala_Dala_lig"/>
    <property type="match status" value="1"/>
</dbReference>
<dbReference type="InterPro" id="IPR011761">
    <property type="entry name" value="ATP-grasp"/>
</dbReference>
<dbReference type="InterPro" id="IPR013815">
    <property type="entry name" value="ATP_grasp_subdomain_1"/>
</dbReference>
<dbReference type="InterPro" id="IPR000291">
    <property type="entry name" value="D-Ala_lig_Van_CS"/>
</dbReference>
<dbReference type="InterPro" id="IPR005905">
    <property type="entry name" value="D_ala_D_ala"/>
</dbReference>
<dbReference type="InterPro" id="IPR011095">
    <property type="entry name" value="Dala_Dala_lig_C"/>
</dbReference>
<dbReference type="InterPro" id="IPR011127">
    <property type="entry name" value="Dala_Dala_lig_N"/>
</dbReference>
<dbReference type="InterPro" id="IPR016185">
    <property type="entry name" value="PreATP-grasp_dom_sf"/>
</dbReference>
<dbReference type="NCBIfam" id="TIGR01205">
    <property type="entry name" value="D_ala_D_alaTIGR"/>
    <property type="match status" value="1"/>
</dbReference>
<dbReference type="NCBIfam" id="NF002528">
    <property type="entry name" value="PRK01966.1-4"/>
    <property type="match status" value="1"/>
</dbReference>
<dbReference type="PANTHER" id="PTHR23132">
    <property type="entry name" value="D-ALANINE--D-ALANINE LIGASE"/>
    <property type="match status" value="1"/>
</dbReference>
<dbReference type="PANTHER" id="PTHR23132:SF25">
    <property type="entry name" value="D-ALANINE--D-ALANINE LIGASE A"/>
    <property type="match status" value="1"/>
</dbReference>
<dbReference type="Pfam" id="PF07478">
    <property type="entry name" value="Dala_Dala_lig_C"/>
    <property type="match status" value="1"/>
</dbReference>
<dbReference type="Pfam" id="PF01820">
    <property type="entry name" value="Dala_Dala_lig_N"/>
    <property type="match status" value="1"/>
</dbReference>
<dbReference type="PIRSF" id="PIRSF039102">
    <property type="entry name" value="Ddl/VanB"/>
    <property type="match status" value="1"/>
</dbReference>
<dbReference type="SUPFAM" id="SSF56059">
    <property type="entry name" value="Glutathione synthetase ATP-binding domain-like"/>
    <property type="match status" value="1"/>
</dbReference>
<dbReference type="SUPFAM" id="SSF52440">
    <property type="entry name" value="PreATP-grasp domain"/>
    <property type="match status" value="1"/>
</dbReference>
<dbReference type="PROSITE" id="PS50975">
    <property type="entry name" value="ATP_GRASP"/>
    <property type="match status" value="1"/>
</dbReference>
<dbReference type="PROSITE" id="PS00843">
    <property type="entry name" value="DALA_DALA_LIGASE_1"/>
    <property type="match status" value="1"/>
</dbReference>
<dbReference type="PROSITE" id="PS00844">
    <property type="entry name" value="DALA_DALA_LIGASE_2"/>
    <property type="match status" value="1"/>
</dbReference>
<gene>
    <name evidence="2" type="primary">ddl</name>
    <name type="ordered locus">lp_2345</name>
</gene>
<reference key="1">
    <citation type="journal article" date="2003" name="Proc. Natl. Acad. Sci. U.S.A.">
        <title>Complete genome sequence of Lactobacillus plantarum WCFS1.</title>
        <authorList>
            <person name="Kleerebezem M."/>
            <person name="Boekhorst J."/>
            <person name="van Kranenburg R."/>
            <person name="Molenaar D."/>
            <person name="Kuipers O.P."/>
            <person name="Leer R."/>
            <person name="Tarchini R."/>
            <person name="Peters S.A."/>
            <person name="Sandbrink H.M."/>
            <person name="Fiers M.W.E.J."/>
            <person name="Stiekema W."/>
            <person name="Klein Lankhorst R.M."/>
            <person name="Bron P.A."/>
            <person name="Hoffer S.M."/>
            <person name="Nierop Groot M.N."/>
            <person name="Kerkhoven R."/>
            <person name="De Vries M."/>
            <person name="Ursing B."/>
            <person name="De Vos W.M."/>
            <person name="Siezen R.J."/>
        </authorList>
    </citation>
    <scope>NUCLEOTIDE SEQUENCE [LARGE SCALE GENOMIC DNA]</scope>
    <source>
        <strain>ATCC BAA-793 / NCIMB 8826 / WCFS1</strain>
    </source>
</reference>
<reference key="2">
    <citation type="journal article" date="2012" name="J. Bacteriol.">
        <title>Complete resequencing and reannotation of the Lactobacillus plantarum WCFS1 genome.</title>
        <authorList>
            <person name="Siezen R.J."/>
            <person name="Francke C."/>
            <person name="Renckens B."/>
            <person name="Boekhorst J."/>
            <person name="Wels M."/>
            <person name="Kleerebezem M."/>
            <person name="van Hijum S.A."/>
        </authorList>
    </citation>
    <scope>NUCLEOTIDE SEQUENCE [LARGE SCALE GENOMIC DNA]</scope>
    <scope>GENOME REANNOTATION</scope>
    <source>
        <strain>ATCC BAA-793 / NCIMB 8826 / WCFS1</strain>
    </source>
</reference>
<evidence type="ECO:0000250" key="1"/>
<evidence type="ECO:0000255" key="2">
    <source>
        <dbReference type="HAMAP-Rule" id="MF_00047"/>
    </source>
</evidence>
<accession>Q88UV8</accession>
<accession>F9UQP8</accession>
<name>DDL_LACPL</name>
<sequence>METQKKIHVGMLFGGNSSEHDVSKRSAHNIYDAMDKNKYEIDLFLITKNGIVLSDAATRRVFDGEPEDQVVAEEMPKLDMSDPLAPIKNLTLAKDIDIFYPVVHGNLGEDGTLQGLFKLLKKPYVGSGVLASAASFDKDITKQILTHHHIQNTKYVVVTPENRDQMTYAYLQAHVGDHLFIKPANQGSSIGIHKAENEQEYLDGLADAFKYDYKILVEESIDNPREVECSILGNENPKASKLGAIDVPKTDTFYDYNNKFVDASGVTFELPVELPADLTKRIQQMSLDAFKALGLKGMARVDFLVSEDGEPYLGEINTLPGFTNISLYPKLWEVSGISYTALIDQLIQLGFDEFKRQSDIHYDFVALDAE</sequence>
<feature type="chain" id="PRO_0000177833" description="D-alanine--D-alanine ligase">
    <location>
        <begin position="1"/>
        <end position="370"/>
    </location>
</feature>
<feature type="domain" description="ATP-grasp" evidence="2">
    <location>
        <begin position="142"/>
        <end position="348"/>
    </location>
</feature>
<feature type="binding site" evidence="2">
    <location>
        <begin position="172"/>
        <end position="227"/>
    </location>
    <ligand>
        <name>ATP</name>
        <dbReference type="ChEBI" id="CHEBI:30616"/>
    </ligand>
</feature>
<feature type="binding site" evidence="2">
    <location>
        <position position="302"/>
    </location>
    <ligand>
        <name>Mg(2+)</name>
        <dbReference type="ChEBI" id="CHEBI:18420"/>
        <label>1</label>
    </ligand>
</feature>
<feature type="binding site" evidence="2">
    <location>
        <position position="315"/>
    </location>
    <ligand>
        <name>Mg(2+)</name>
        <dbReference type="ChEBI" id="CHEBI:18420"/>
        <label>1</label>
    </ligand>
</feature>
<feature type="binding site" evidence="2">
    <location>
        <position position="315"/>
    </location>
    <ligand>
        <name>Mg(2+)</name>
        <dbReference type="ChEBI" id="CHEBI:18420"/>
        <label>2</label>
    </ligand>
</feature>
<feature type="binding site" evidence="2">
    <location>
        <position position="317"/>
    </location>
    <ligand>
        <name>Mg(2+)</name>
        <dbReference type="ChEBI" id="CHEBI:18420"/>
        <label>2</label>
    </ligand>
</feature>
<proteinExistence type="inferred from homology"/>